<keyword id="KW-0150">Chloroplast</keyword>
<keyword id="KW-0472">Membrane</keyword>
<keyword id="KW-0934">Plastid</keyword>
<keyword id="KW-0793">Thylakoid</keyword>
<keyword id="KW-0812">Transmembrane</keyword>
<keyword id="KW-1133">Transmembrane helix</keyword>
<name>PSBN_ALLTE</name>
<dbReference type="EMBL" id="AY147536">
    <property type="protein sequence ID" value="AAN32244.1"/>
    <property type="molecule type" value="Genomic_DNA"/>
</dbReference>
<dbReference type="SMR" id="Q67HV8"/>
<dbReference type="GO" id="GO:0009535">
    <property type="term" value="C:chloroplast thylakoid membrane"/>
    <property type="evidence" value="ECO:0007669"/>
    <property type="project" value="UniProtKB-SubCell"/>
</dbReference>
<dbReference type="GO" id="GO:0015979">
    <property type="term" value="P:photosynthesis"/>
    <property type="evidence" value="ECO:0007669"/>
    <property type="project" value="InterPro"/>
</dbReference>
<dbReference type="HAMAP" id="MF_00293">
    <property type="entry name" value="PSII_PsbN"/>
    <property type="match status" value="1"/>
</dbReference>
<dbReference type="InterPro" id="IPR003398">
    <property type="entry name" value="PSII_PsbN"/>
</dbReference>
<dbReference type="PANTHER" id="PTHR35326">
    <property type="entry name" value="PROTEIN PSBN"/>
    <property type="match status" value="1"/>
</dbReference>
<dbReference type="PANTHER" id="PTHR35326:SF3">
    <property type="entry name" value="PROTEIN PSBN"/>
    <property type="match status" value="1"/>
</dbReference>
<dbReference type="Pfam" id="PF02468">
    <property type="entry name" value="PsbN"/>
    <property type="match status" value="1"/>
</dbReference>
<proteinExistence type="inferred from homology"/>
<reference key="1">
    <citation type="submission" date="2002-09" db="EMBL/GenBank/DDBJ databases">
        <title>Phylogenetic relationships among the major lineages of Asparagales based on a large chloroplast data set.</title>
        <authorList>
            <person name="McPherson M.A."/>
            <person name="Rai H.S."/>
            <person name="Wong W.A."/>
            <person name="Graham S.W."/>
        </authorList>
    </citation>
    <scope>NUCLEOTIDE SEQUENCE [GENOMIC DNA]</scope>
</reference>
<comment type="function">
    <text evidence="1">May play a role in photosystem I and II biogenesis.</text>
</comment>
<comment type="subcellular location">
    <subcellularLocation>
        <location evidence="1">Plastid</location>
        <location evidence="1">Chloroplast thylakoid membrane</location>
        <topology evidence="1">Single-pass membrane protein</topology>
    </subcellularLocation>
</comment>
<comment type="similarity">
    <text evidence="1">Belongs to the PsbN family.</text>
</comment>
<comment type="caution">
    <text evidence="1">Originally thought to be a component of PSII; based on experiments in Synechocystis, N.tabacum and barley, and its absence from PSII in T.elongatus and T.vulcanus, this is probably not true.</text>
</comment>
<gene>
    <name evidence="1" type="primary">psbN</name>
</gene>
<evidence type="ECO:0000255" key="1">
    <source>
        <dbReference type="HAMAP-Rule" id="MF_00293"/>
    </source>
</evidence>
<accession>Q67HV8</accession>
<geneLocation type="chloroplast"/>
<protein>
    <recommendedName>
        <fullName evidence="1">Protein PsbN</fullName>
    </recommendedName>
</protein>
<feature type="chain" id="PRO_0000207863" description="Protein PsbN">
    <location>
        <begin position="1"/>
        <end position="43"/>
    </location>
</feature>
<feature type="transmembrane region" description="Helical" evidence="1">
    <location>
        <begin position="7"/>
        <end position="27"/>
    </location>
</feature>
<organism>
    <name type="scientific">Allium textile</name>
    <name type="common">Textile onion</name>
    <name type="synonym">Allium reticulatum</name>
    <dbReference type="NCBI Taxonomy" id="207935"/>
    <lineage>
        <taxon>Eukaryota</taxon>
        <taxon>Viridiplantae</taxon>
        <taxon>Streptophyta</taxon>
        <taxon>Embryophyta</taxon>
        <taxon>Tracheophyta</taxon>
        <taxon>Spermatophyta</taxon>
        <taxon>Magnoliopsida</taxon>
        <taxon>Liliopsida</taxon>
        <taxon>Asparagales</taxon>
        <taxon>Amaryllidaceae</taxon>
        <taxon>Allioideae</taxon>
        <taxon>Allieae</taxon>
        <taxon>Allium</taxon>
    </lineage>
</organism>
<sequence length="43" mass="4722">METATLVAIFISGLLVSFTGYALYTAFGQPSQQLRDPFEEHGD</sequence>